<feature type="chain" id="PRO_0000079476" description="Cerebral cavernous malformations 2 protein-like">
    <location>
        <begin position="1"/>
        <end position="571"/>
    </location>
</feature>
<feature type="region of interest" description="Disordered" evidence="1">
    <location>
        <begin position="164"/>
        <end position="193"/>
    </location>
</feature>
<feature type="region of interest" description="Disordered" evidence="1">
    <location>
        <begin position="212"/>
        <end position="295"/>
    </location>
</feature>
<feature type="region of interest" description="Disordered" evidence="1">
    <location>
        <begin position="544"/>
        <end position="571"/>
    </location>
</feature>
<feature type="compositionally biased region" description="Basic and acidic residues" evidence="1">
    <location>
        <begin position="184"/>
        <end position="193"/>
    </location>
</feature>
<feature type="compositionally biased region" description="Gly residues" evidence="1">
    <location>
        <begin position="212"/>
        <end position="223"/>
    </location>
</feature>
<feature type="compositionally biased region" description="Basic and acidic residues" evidence="1">
    <location>
        <begin position="237"/>
        <end position="251"/>
    </location>
</feature>
<feature type="compositionally biased region" description="Gly residues" evidence="1">
    <location>
        <begin position="253"/>
        <end position="264"/>
    </location>
</feature>
<feature type="compositionally biased region" description="Pro residues" evidence="1">
    <location>
        <begin position="286"/>
        <end position="295"/>
    </location>
</feature>
<feature type="compositionally biased region" description="Acidic residues" evidence="1">
    <location>
        <begin position="545"/>
        <end position="555"/>
    </location>
</feature>
<feature type="splice variant" id="VSP_007634" description="In isoform 3." evidence="2">
    <original>RAGGGGGGSLERQRAGARASG</original>
    <variation>PTRSTRRTPAPTPTATWSSWL</variation>
    <location>
        <begin position="215"/>
        <end position="235"/>
    </location>
</feature>
<feature type="splice variant" id="VSP_007635" description="In isoform 3." evidence="2">
    <location>
        <begin position="236"/>
        <end position="571"/>
    </location>
</feature>
<feature type="splice variant" id="VSP_007633" description="In isoform 2." evidence="3">
    <original>SESCHTDGTYAYDADFSCCSSFNGSQDTFEACYSGTSTPSFHGSHCSGSDHSSLGLEQLQDYMVTLRSKLGPLEIQQFAMLLREYRLGLPIQDYCTGLLKLYGDRRKFLLLGMRPFIPDQDIGYFEGFLEGVGIREGGILTDSFGRIKRSMSSTSASAVRSYDGAAQRPEAQAFHRLLADITHDIEALAPDDDDDDEDEPRGSRGGSDAAEDNYL</original>
    <variation>IMAPRTPLKHVTAARPHLLSMAPTAAAATTAVWAWSSYRITWSRCGVSWGPSRSSSLRCCCGSTGWGCPSRTIAQAC</variation>
    <location>
        <begin position="357"/>
        <end position="571"/>
    </location>
</feature>
<comment type="interaction">
    <interactant intactId="EBI-350645">
        <id>Q9NUG4</id>
    </interactant>
    <interactant intactId="EBI-11523526">
        <id>Q13554-3</id>
        <label>CAMK2B</label>
    </interactant>
    <organismsDiffer>false</organismsDiffer>
    <experiments>3</experiments>
</comment>
<comment type="interaction">
    <interactant intactId="EBI-350645">
        <id>Q9NUG4</id>
    </interactant>
    <interactant intactId="EBI-10302990">
        <id>Q9BYU1</id>
        <label>PBX4</label>
    </interactant>
    <organismsDiffer>false</organismsDiffer>
    <experiments>5</experiments>
</comment>
<comment type="interaction">
    <interactant intactId="EBI-350645">
        <id>Q9NUG4</id>
    </interactant>
    <interactant intactId="EBI-372273">
        <id>P20618</id>
        <label>PSMB1</label>
    </interactant>
    <organismsDiffer>false</organismsDiffer>
    <experiments>3</experiments>
</comment>
<comment type="interaction">
    <interactant intactId="EBI-350645">
        <id>Q9NUG4</id>
    </interactant>
    <interactant intactId="EBI-742842">
        <id>Q9NZ43</id>
        <label>USE1</label>
    </interactant>
    <organismsDiffer>false</organismsDiffer>
    <experiments>3</experiments>
</comment>
<comment type="alternative products">
    <event type="alternative splicing"/>
    <isoform>
        <id>Q9NUG4-1</id>
        <name>1</name>
        <sequence type="displayed"/>
    </isoform>
    <isoform>
        <id>Q9NUG4-2</id>
        <name>2</name>
        <sequence type="described" ref="VSP_007633"/>
    </isoform>
    <isoform>
        <id>Q9NUG4-3</id>
        <name>3</name>
        <sequence type="described" ref="VSP_007634 VSP_007635"/>
    </isoform>
</comment>
<comment type="similarity">
    <text evidence="4">Belongs to the CCM2 family.</text>
</comment>
<comment type="sequence caution" evidence="4">
    <conflict type="erroneous initiation">
        <sequence resource="EMBL-CDS" id="AAH32455"/>
    </conflict>
    <text>Truncated N-terminus.</text>
</comment>
<proteinExistence type="evidence at protein level"/>
<protein>
    <recommendedName>
        <fullName>Cerebral cavernous malformations 2 protein-like</fullName>
        <shortName>CCM2-like</shortName>
    </recommendedName>
</protein>
<accession>Q9NUG4</accession>
<accession>Q5JYR9</accession>
<accession>Q8N5F1</accession>
<accession>Q8N6G8</accession>
<accession>Q96MD5</accession>
<reference key="1">
    <citation type="journal article" date="2004" name="Nat. Genet.">
        <title>Complete sequencing and characterization of 21,243 full-length human cDNAs.</title>
        <authorList>
            <person name="Ota T."/>
            <person name="Suzuki Y."/>
            <person name="Nishikawa T."/>
            <person name="Otsuki T."/>
            <person name="Sugiyama T."/>
            <person name="Irie R."/>
            <person name="Wakamatsu A."/>
            <person name="Hayashi K."/>
            <person name="Sato H."/>
            <person name="Nagai K."/>
            <person name="Kimura K."/>
            <person name="Makita H."/>
            <person name="Sekine M."/>
            <person name="Obayashi M."/>
            <person name="Nishi T."/>
            <person name="Shibahara T."/>
            <person name="Tanaka T."/>
            <person name="Ishii S."/>
            <person name="Yamamoto J."/>
            <person name="Saito K."/>
            <person name="Kawai Y."/>
            <person name="Isono Y."/>
            <person name="Nakamura Y."/>
            <person name="Nagahari K."/>
            <person name="Murakami K."/>
            <person name="Yasuda T."/>
            <person name="Iwayanagi T."/>
            <person name="Wagatsuma M."/>
            <person name="Shiratori A."/>
            <person name="Sudo H."/>
            <person name="Hosoiri T."/>
            <person name="Kaku Y."/>
            <person name="Kodaira H."/>
            <person name="Kondo H."/>
            <person name="Sugawara M."/>
            <person name="Takahashi M."/>
            <person name="Kanda K."/>
            <person name="Yokoi T."/>
            <person name="Furuya T."/>
            <person name="Kikkawa E."/>
            <person name="Omura Y."/>
            <person name="Abe K."/>
            <person name="Kamihara K."/>
            <person name="Katsuta N."/>
            <person name="Sato K."/>
            <person name="Tanikawa M."/>
            <person name="Yamazaki M."/>
            <person name="Ninomiya K."/>
            <person name="Ishibashi T."/>
            <person name="Yamashita H."/>
            <person name="Murakawa K."/>
            <person name="Fujimori K."/>
            <person name="Tanai H."/>
            <person name="Kimata M."/>
            <person name="Watanabe M."/>
            <person name="Hiraoka S."/>
            <person name="Chiba Y."/>
            <person name="Ishida S."/>
            <person name="Ono Y."/>
            <person name="Takiguchi S."/>
            <person name="Watanabe S."/>
            <person name="Yosida M."/>
            <person name="Hotuta T."/>
            <person name="Kusano J."/>
            <person name="Kanehori K."/>
            <person name="Takahashi-Fujii A."/>
            <person name="Hara H."/>
            <person name="Tanase T.-O."/>
            <person name="Nomura Y."/>
            <person name="Togiya S."/>
            <person name="Komai F."/>
            <person name="Hara R."/>
            <person name="Takeuchi K."/>
            <person name="Arita M."/>
            <person name="Imose N."/>
            <person name="Musashino K."/>
            <person name="Yuuki H."/>
            <person name="Oshima A."/>
            <person name="Sasaki N."/>
            <person name="Aotsuka S."/>
            <person name="Yoshikawa Y."/>
            <person name="Matsunawa H."/>
            <person name="Ichihara T."/>
            <person name="Shiohata N."/>
            <person name="Sano S."/>
            <person name="Moriya S."/>
            <person name="Momiyama H."/>
            <person name="Satoh N."/>
            <person name="Takami S."/>
            <person name="Terashima Y."/>
            <person name="Suzuki O."/>
            <person name="Nakagawa S."/>
            <person name="Senoh A."/>
            <person name="Mizoguchi H."/>
            <person name="Goto Y."/>
            <person name="Shimizu F."/>
            <person name="Wakebe H."/>
            <person name="Hishigaki H."/>
            <person name="Watanabe T."/>
            <person name="Sugiyama A."/>
            <person name="Takemoto M."/>
            <person name="Kawakami B."/>
            <person name="Yamazaki M."/>
            <person name="Watanabe K."/>
            <person name="Kumagai A."/>
            <person name="Itakura S."/>
            <person name="Fukuzumi Y."/>
            <person name="Fujimori Y."/>
            <person name="Komiyama M."/>
            <person name="Tashiro H."/>
            <person name="Tanigami A."/>
            <person name="Fujiwara T."/>
            <person name="Ono T."/>
            <person name="Yamada K."/>
            <person name="Fujii Y."/>
            <person name="Ozaki K."/>
            <person name="Hirao M."/>
            <person name="Ohmori Y."/>
            <person name="Kawabata A."/>
            <person name="Hikiji T."/>
            <person name="Kobatake N."/>
            <person name="Inagaki H."/>
            <person name="Ikema Y."/>
            <person name="Okamoto S."/>
            <person name="Okitani R."/>
            <person name="Kawakami T."/>
            <person name="Noguchi S."/>
            <person name="Itoh T."/>
            <person name="Shigeta K."/>
            <person name="Senba T."/>
            <person name="Matsumura K."/>
            <person name="Nakajima Y."/>
            <person name="Mizuno T."/>
            <person name="Morinaga M."/>
            <person name="Sasaki M."/>
            <person name="Togashi T."/>
            <person name="Oyama M."/>
            <person name="Hata H."/>
            <person name="Watanabe M."/>
            <person name="Komatsu T."/>
            <person name="Mizushima-Sugano J."/>
            <person name="Satoh T."/>
            <person name="Shirai Y."/>
            <person name="Takahashi Y."/>
            <person name="Nakagawa K."/>
            <person name="Okumura K."/>
            <person name="Nagase T."/>
            <person name="Nomura N."/>
            <person name="Kikuchi H."/>
            <person name="Masuho Y."/>
            <person name="Yamashita R."/>
            <person name="Nakai K."/>
            <person name="Yada T."/>
            <person name="Nakamura Y."/>
            <person name="Ohara O."/>
            <person name="Isogai T."/>
            <person name="Sugano S."/>
        </authorList>
    </citation>
    <scope>NUCLEOTIDE SEQUENCE [LARGE SCALE MRNA] (ISOFORM 3)</scope>
    <source>
        <tissue>Small intestine</tissue>
    </source>
</reference>
<reference key="2">
    <citation type="journal article" date="2001" name="Nature">
        <title>The DNA sequence and comparative analysis of human chromosome 20.</title>
        <authorList>
            <person name="Deloukas P."/>
            <person name="Matthews L.H."/>
            <person name="Ashurst J.L."/>
            <person name="Burton J."/>
            <person name="Gilbert J.G.R."/>
            <person name="Jones M."/>
            <person name="Stavrides G."/>
            <person name="Almeida J.P."/>
            <person name="Babbage A.K."/>
            <person name="Bagguley C.L."/>
            <person name="Bailey J."/>
            <person name="Barlow K.F."/>
            <person name="Bates K.N."/>
            <person name="Beard L.M."/>
            <person name="Beare D.M."/>
            <person name="Beasley O.P."/>
            <person name="Bird C.P."/>
            <person name="Blakey S.E."/>
            <person name="Bridgeman A.M."/>
            <person name="Brown A.J."/>
            <person name="Buck D."/>
            <person name="Burrill W.D."/>
            <person name="Butler A.P."/>
            <person name="Carder C."/>
            <person name="Carter N.P."/>
            <person name="Chapman J.C."/>
            <person name="Clamp M."/>
            <person name="Clark G."/>
            <person name="Clark L.N."/>
            <person name="Clark S.Y."/>
            <person name="Clee C.M."/>
            <person name="Clegg S."/>
            <person name="Cobley V.E."/>
            <person name="Collier R.E."/>
            <person name="Connor R.E."/>
            <person name="Corby N.R."/>
            <person name="Coulson A."/>
            <person name="Coville G.J."/>
            <person name="Deadman R."/>
            <person name="Dhami P.D."/>
            <person name="Dunn M."/>
            <person name="Ellington A.G."/>
            <person name="Frankland J.A."/>
            <person name="Fraser A."/>
            <person name="French L."/>
            <person name="Garner P."/>
            <person name="Grafham D.V."/>
            <person name="Griffiths C."/>
            <person name="Griffiths M.N.D."/>
            <person name="Gwilliam R."/>
            <person name="Hall R.E."/>
            <person name="Hammond S."/>
            <person name="Harley J.L."/>
            <person name="Heath P.D."/>
            <person name="Ho S."/>
            <person name="Holden J.L."/>
            <person name="Howden P.J."/>
            <person name="Huckle E."/>
            <person name="Hunt A.R."/>
            <person name="Hunt S.E."/>
            <person name="Jekosch K."/>
            <person name="Johnson C.M."/>
            <person name="Johnson D."/>
            <person name="Kay M.P."/>
            <person name="Kimberley A.M."/>
            <person name="King A."/>
            <person name="Knights A."/>
            <person name="Laird G.K."/>
            <person name="Lawlor S."/>
            <person name="Lehvaeslaiho M.H."/>
            <person name="Leversha M.A."/>
            <person name="Lloyd C."/>
            <person name="Lloyd D.M."/>
            <person name="Lovell J.D."/>
            <person name="Marsh V.L."/>
            <person name="Martin S.L."/>
            <person name="McConnachie L.J."/>
            <person name="McLay K."/>
            <person name="McMurray A.A."/>
            <person name="Milne S.A."/>
            <person name="Mistry D."/>
            <person name="Moore M.J.F."/>
            <person name="Mullikin J.C."/>
            <person name="Nickerson T."/>
            <person name="Oliver K."/>
            <person name="Parker A."/>
            <person name="Patel R."/>
            <person name="Pearce T.A.V."/>
            <person name="Peck A.I."/>
            <person name="Phillimore B.J.C.T."/>
            <person name="Prathalingam S.R."/>
            <person name="Plumb R.W."/>
            <person name="Ramsay H."/>
            <person name="Rice C.M."/>
            <person name="Ross M.T."/>
            <person name="Scott C.E."/>
            <person name="Sehra H.K."/>
            <person name="Shownkeen R."/>
            <person name="Sims S."/>
            <person name="Skuce C.D."/>
            <person name="Smith M.L."/>
            <person name="Soderlund C."/>
            <person name="Steward C.A."/>
            <person name="Sulston J.E."/>
            <person name="Swann R.M."/>
            <person name="Sycamore N."/>
            <person name="Taylor R."/>
            <person name="Tee L."/>
            <person name="Thomas D.W."/>
            <person name="Thorpe A."/>
            <person name="Tracey A."/>
            <person name="Tromans A.C."/>
            <person name="Vaudin M."/>
            <person name="Wall M."/>
            <person name="Wallis J.M."/>
            <person name="Whitehead S.L."/>
            <person name="Whittaker P."/>
            <person name="Willey D.L."/>
            <person name="Williams L."/>
            <person name="Williams S.A."/>
            <person name="Wilming L."/>
            <person name="Wray P.W."/>
            <person name="Hubbard T."/>
            <person name="Durbin R.M."/>
            <person name="Bentley D.R."/>
            <person name="Beck S."/>
            <person name="Rogers J."/>
        </authorList>
    </citation>
    <scope>NUCLEOTIDE SEQUENCE [LARGE SCALE GENOMIC DNA]</scope>
</reference>
<reference key="3">
    <citation type="journal article" date="2004" name="Genome Res.">
        <title>The status, quality, and expansion of the NIH full-length cDNA project: the Mammalian Gene Collection (MGC).</title>
        <authorList>
            <consortium name="The MGC Project Team"/>
        </authorList>
    </citation>
    <scope>NUCLEOTIDE SEQUENCE [LARGE SCALE MRNA] (ISOFORMS 1 AND 2)</scope>
</reference>
<keyword id="KW-0025">Alternative splicing</keyword>
<keyword id="KW-1267">Proteomics identification</keyword>
<keyword id="KW-1185">Reference proteome</keyword>
<gene>
    <name type="primary">CCM2L</name>
    <name type="synonym">C20orf160</name>
</gene>
<sequence>MEYEVKKGKKGFVSPIRRLVFPKAGRRAACRSSVSRRPLHSMPLYPPDYLIDPQILLCDYLEKEVKFLGHLTWVTSSLNPSSRDELLQLLDTARQLKELPLKTTAEQDSILSLSARCLLLTWRDNEELILRIPTHEIAAASYLQDDALHLLVLKTGLGVDPVPAGVDASPGGAGRDPGPPGGAPEKRRVGTAERRHTICSLDWRMGWGGGAAEARAGGGGGGSLERQRAGARASGSWERRQTFSGSWERRHGGGGGGGGAGKPGGSWERRQAGSGGGGSWERRHPGPNPLDPQDPSPDAYCNLVILAVANRDAAEESCALICQVFQIIYGDQSIECVDRAGYHYTSTPERPWLCSRSESCHTDGTYAYDADFSCCSSFNGSQDTFEACYSGTSTPSFHGSHCSGSDHSSLGLEQLQDYMVTLRSKLGPLEIQQFAMLLREYRLGLPIQDYCTGLLKLYGDRRKFLLLGMRPFIPDQDIGYFEGFLEGVGIREGGILTDSFGRIKRSMSSTSASAVRSYDGAAQRPEAQAFHRLLADITHDIEALAPDDDDDDEDEPRGSRGGSDAAEDNYL</sequence>
<name>CCM2L_HUMAN</name>
<dbReference type="EMBL" id="AK057090">
    <property type="protein sequence ID" value="BAB71363.1"/>
    <property type="molecule type" value="mRNA"/>
</dbReference>
<dbReference type="EMBL" id="AL031658">
    <property type="status" value="NOT_ANNOTATED_CDS"/>
    <property type="molecule type" value="Genomic_DNA"/>
</dbReference>
<dbReference type="EMBL" id="BC030254">
    <property type="protein sequence ID" value="AAH30254.1"/>
    <property type="molecule type" value="mRNA"/>
</dbReference>
<dbReference type="EMBL" id="BC032455">
    <property type="protein sequence ID" value="AAH32455.1"/>
    <property type="status" value="ALT_INIT"/>
    <property type="molecule type" value="mRNA"/>
</dbReference>
<dbReference type="CCDS" id="CCDS13195.1">
    <molecule id="Q9NUG4-2"/>
</dbReference>
<dbReference type="CCDS" id="CCDS93028.1">
    <molecule id="Q9NUG4-1"/>
</dbReference>
<dbReference type="RefSeq" id="NP_001352621.1">
    <molecule id="Q9NUG4-1"/>
    <property type="nucleotide sequence ID" value="NM_001365692.1"/>
</dbReference>
<dbReference type="RefSeq" id="NP_542192.2">
    <molecule id="Q9NUG4-2"/>
    <property type="nucleotide sequence ID" value="NM_080625.3"/>
</dbReference>
<dbReference type="RefSeq" id="XP_006723769.1">
    <property type="nucleotide sequence ID" value="XM_006723706.3"/>
</dbReference>
<dbReference type="RefSeq" id="XP_011526871.1">
    <property type="nucleotide sequence ID" value="XM_011528569.1"/>
</dbReference>
<dbReference type="SMR" id="Q9NUG4"/>
<dbReference type="BioGRID" id="126664">
    <property type="interactions" value="6"/>
</dbReference>
<dbReference type="FunCoup" id="Q9NUG4">
    <property type="interactions" value="19"/>
</dbReference>
<dbReference type="IntAct" id="Q9NUG4">
    <property type="interactions" value="7"/>
</dbReference>
<dbReference type="STRING" id="9606.ENSP00000262659"/>
<dbReference type="GlyGen" id="Q9NUG4">
    <property type="glycosylation" value="1 site, 1 O-linked glycan (1 site)"/>
</dbReference>
<dbReference type="iPTMnet" id="Q9NUG4"/>
<dbReference type="PhosphoSitePlus" id="Q9NUG4"/>
<dbReference type="BioMuta" id="CCM2L"/>
<dbReference type="DMDM" id="32171369"/>
<dbReference type="jPOST" id="Q9NUG4"/>
<dbReference type="MassIVE" id="Q9NUG4"/>
<dbReference type="PaxDb" id="9606-ENSP00000262659"/>
<dbReference type="PeptideAtlas" id="Q9NUG4"/>
<dbReference type="ProteomicsDB" id="82668">
    <molecule id="Q9NUG4-1"/>
</dbReference>
<dbReference type="ProteomicsDB" id="82669">
    <molecule id="Q9NUG4-2"/>
</dbReference>
<dbReference type="ProteomicsDB" id="82670">
    <molecule id="Q9NUG4-3"/>
</dbReference>
<dbReference type="Antibodypedia" id="2011">
    <property type="antibodies" value="67 antibodies from 16 providers"/>
</dbReference>
<dbReference type="DNASU" id="140706"/>
<dbReference type="Ensembl" id="ENST00000262659.12">
    <molecule id="Q9NUG4-2"/>
    <property type="protein sequence ID" value="ENSP00000262659.8"/>
    <property type="gene ID" value="ENSG00000101331.17"/>
</dbReference>
<dbReference type="Ensembl" id="ENST00000452892.3">
    <molecule id="Q9NUG4-1"/>
    <property type="protein sequence ID" value="ENSP00000392448.2"/>
    <property type="gene ID" value="ENSG00000101331.17"/>
</dbReference>
<dbReference type="GeneID" id="140706"/>
<dbReference type="KEGG" id="hsa:140706"/>
<dbReference type="MANE-Select" id="ENST00000452892.3">
    <property type="protein sequence ID" value="ENSP00000392448.2"/>
    <property type="RefSeq nucleotide sequence ID" value="NM_001365692.1"/>
    <property type="RefSeq protein sequence ID" value="NP_001352621.1"/>
</dbReference>
<dbReference type="UCSC" id="uc002wxf.3">
    <molecule id="Q9NUG4-1"/>
    <property type="organism name" value="human"/>
</dbReference>
<dbReference type="AGR" id="HGNC:16153"/>
<dbReference type="CTD" id="140706"/>
<dbReference type="DisGeNET" id="140706"/>
<dbReference type="GeneCards" id="CCM2L"/>
<dbReference type="HGNC" id="HGNC:16153">
    <property type="gene designation" value="CCM2L"/>
</dbReference>
<dbReference type="HPA" id="ENSG00000101331">
    <property type="expression patterns" value="Tissue enriched (lymphoid)"/>
</dbReference>
<dbReference type="neXtProt" id="NX_Q9NUG4"/>
<dbReference type="OpenTargets" id="ENSG00000101331"/>
<dbReference type="PharmGKB" id="PA25702"/>
<dbReference type="VEuPathDB" id="HostDB:ENSG00000101331"/>
<dbReference type="eggNOG" id="ENOG502QW6F">
    <property type="taxonomic scope" value="Eukaryota"/>
</dbReference>
<dbReference type="GeneTree" id="ENSGT00390000016168"/>
<dbReference type="HOGENOM" id="CLU_051853_0_0_1"/>
<dbReference type="InParanoid" id="Q9NUG4"/>
<dbReference type="OMA" id="ETFEAYC"/>
<dbReference type="OrthoDB" id="9483449at2759"/>
<dbReference type="PAN-GO" id="Q9NUG4">
    <property type="GO annotations" value="1 GO annotation based on evolutionary models"/>
</dbReference>
<dbReference type="PhylomeDB" id="Q9NUG4"/>
<dbReference type="TreeFam" id="TF328517"/>
<dbReference type="PathwayCommons" id="Q9NUG4"/>
<dbReference type="SignaLink" id="Q9NUG4"/>
<dbReference type="BioGRID-ORCS" id="140706">
    <property type="hits" value="15 hits in 1143 CRISPR screens"/>
</dbReference>
<dbReference type="ChiTaRS" id="CCM2L">
    <property type="organism name" value="human"/>
</dbReference>
<dbReference type="GenomeRNAi" id="140706"/>
<dbReference type="Pharos" id="Q9NUG4">
    <property type="development level" value="Tdark"/>
</dbReference>
<dbReference type="PRO" id="PR:Q9NUG4"/>
<dbReference type="Proteomes" id="UP000005640">
    <property type="component" value="Chromosome 20"/>
</dbReference>
<dbReference type="RNAct" id="Q9NUG4">
    <property type="molecule type" value="protein"/>
</dbReference>
<dbReference type="Bgee" id="ENSG00000101331">
    <property type="expression patterns" value="Expressed in spleen and 147 other cell types or tissues"/>
</dbReference>
<dbReference type="CDD" id="cd13516">
    <property type="entry name" value="HHD_CCM2"/>
    <property type="match status" value="1"/>
</dbReference>
<dbReference type="CDD" id="cd13166">
    <property type="entry name" value="PTB_CCM2"/>
    <property type="match status" value="1"/>
</dbReference>
<dbReference type="FunFam" id="1.20.1160.20:FF:000004">
    <property type="entry name" value="Cerebral cavernous malformation 2"/>
    <property type="match status" value="1"/>
</dbReference>
<dbReference type="Gene3D" id="1.20.1160.20">
    <property type="match status" value="1"/>
</dbReference>
<dbReference type="Gene3D" id="2.30.29.30">
    <property type="entry name" value="Pleckstrin-homology domain (PH domain)/Phosphotyrosine-binding domain (PTB)"/>
    <property type="match status" value="1"/>
</dbReference>
<dbReference type="InterPro" id="IPR032375">
    <property type="entry name" value="CCM2_C"/>
</dbReference>
<dbReference type="InterPro" id="IPR026159">
    <property type="entry name" value="Malcavernin"/>
</dbReference>
<dbReference type="InterPro" id="IPR011993">
    <property type="entry name" value="PH-like_dom_sf"/>
</dbReference>
<dbReference type="PANTHER" id="PTHR21642:SF2">
    <property type="entry name" value="CEREBRAL CAVERNOUS MALFORMATIONS 2 PROTEIN-LIKE"/>
    <property type="match status" value="1"/>
</dbReference>
<dbReference type="PANTHER" id="PTHR21642">
    <property type="entry name" value="CEREBRAL CAVERNOUS MALFORMATIONS PROTEIN 2 HOMOLOG"/>
    <property type="match status" value="1"/>
</dbReference>
<dbReference type="Pfam" id="PF16545">
    <property type="entry name" value="CCM2_C"/>
    <property type="match status" value="1"/>
</dbReference>
<evidence type="ECO:0000256" key="1">
    <source>
        <dbReference type="SAM" id="MobiDB-lite"/>
    </source>
</evidence>
<evidence type="ECO:0000303" key="2">
    <source>
    </source>
</evidence>
<evidence type="ECO:0000303" key="3">
    <source>
    </source>
</evidence>
<evidence type="ECO:0000305" key="4"/>
<organism>
    <name type="scientific">Homo sapiens</name>
    <name type="common">Human</name>
    <dbReference type="NCBI Taxonomy" id="9606"/>
    <lineage>
        <taxon>Eukaryota</taxon>
        <taxon>Metazoa</taxon>
        <taxon>Chordata</taxon>
        <taxon>Craniata</taxon>
        <taxon>Vertebrata</taxon>
        <taxon>Euteleostomi</taxon>
        <taxon>Mammalia</taxon>
        <taxon>Eutheria</taxon>
        <taxon>Euarchontoglires</taxon>
        <taxon>Primates</taxon>
        <taxon>Haplorrhini</taxon>
        <taxon>Catarrhini</taxon>
        <taxon>Hominidae</taxon>
        <taxon>Homo</taxon>
    </lineage>
</organism>